<comment type="function">
    <text evidence="1">DNA-dependent RNA polymerase catalyzes the transcription of DNA into RNA using the four ribonucleoside triphosphates as substrates.</text>
</comment>
<comment type="catalytic activity">
    <reaction evidence="1">
        <text>RNA(n) + a ribonucleoside 5'-triphosphate = RNA(n+1) + diphosphate</text>
        <dbReference type="Rhea" id="RHEA:21248"/>
        <dbReference type="Rhea" id="RHEA-COMP:14527"/>
        <dbReference type="Rhea" id="RHEA-COMP:17342"/>
        <dbReference type="ChEBI" id="CHEBI:33019"/>
        <dbReference type="ChEBI" id="CHEBI:61557"/>
        <dbReference type="ChEBI" id="CHEBI:140395"/>
        <dbReference type="EC" id="2.7.7.6"/>
    </reaction>
</comment>
<comment type="subunit">
    <text evidence="1">Homodimer. The RNAP catalytic core consists of 2 alpha, 1 beta, 1 beta' and 1 omega subunit. When a sigma factor is associated with the core the holoenzyme is formed, which can initiate transcription.</text>
</comment>
<comment type="domain">
    <text evidence="1">The N-terminal domain is essential for RNAP assembly and basal transcription, whereas the C-terminal domain is involved in interaction with transcriptional regulators and with upstream promoter elements.</text>
</comment>
<comment type="similarity">
    <text evidence="1">Belongs to the RNA polymerase alpha chain family.</text>
</comment>
<gene>
    <name evidence="1" type="primary">rpoA</name>
    <name type="ordered locus">CHU_3136</name>
</gene>
<evidence type="ECO:0000255" key="1">
    <source>
        <dbReference type="HAMAP-Rule" id="MF_00059"/>
    </source>
</evidence>
<accession>Q11QD8</accession>
<keyword id="KW-0240">DNA-directed RNA polymerase</keyword>
<keyword id="KW-0548">Nucleotidyltransferase</keyword>
<keyword id="KW-1185">Reference proteome</keyword>
<keyword id="KW-0804">Transcription</keyword>
<keyword id="KW-0808">Transferase</keyword>
<proteinExistence type="inferred from homology"/>
<protein>
    <recommendedName>
        <fullName evidence="1">DNA-directed RNA polymerase subunit alpha</fullName>
        <shortName evidence="1">RNAP subunit alpha</shortName>
        <ecNumber evidence="1">2.7.7.6</ecNumber>
    </recommendedName>
    <alternativeName>
        <fullName evidence="1">RNA polymerase subunit alpha</fullName>
    </alternativeName>
    <alternativeName>
        <fullName evidence="1">Transcriptase subunit alpha</fullName>
    </alternativeName>
</protein>
<feature type="chain" id="PRO_0000264495" description="DNA-directed RNA polymerase subunit alpha">
    <location>
        <begin position="1"/>
        <end position="329"/>
    </location>
</feature>
<feature type="region of interest" description="Alpha N-terminal domain (alpha-NTD)" evidence="1">
    <location>
        <begin position="1"/>
        <end position="231"/>
    </location>
</feature>
<feature type="region of interest" description="Alpha C-terminal domain (alpha-CTD)" evidence="1">
    <location>
        <begin position="247"/>
        <end position="329"/>
    </location>
</feature>
<reference key="1">
    <citation type="journal article" date="2007" name="Appl. Environ. Microbiol.">
        <title>Genome sequence of the cellulolytic gliding bacterium Cytophaga hutchinsonii.</title>
        <authorList>
            <person name="Xie G."/>
            <person name="Bruce D.C."/>
            <person name="Challacombe J.F."/>
            <person name="Chertkov O."/>
            <person name="Detter J.C."/>
            <person name="Gilna P."/>
            <person name="Han C.S."/>
            <person name="Lucas S."/>
            <person name="Misra M."/>
            <person name="Myers G.L."/>
            <person name="Richardson P."/>
            <person name="Tapia R."/>
            <person name="Thayer N."/>
            <person name="Thompson L.S."/>
            <person name="Brettin T.S."/>
            <person name="Henrissat B."/>
            <person name="Wilson D.B."/>
            <person name="McBride M.J."/>
        </authorList>
    </citation>
    <scope>NUCLEOTIDE SEQUENCE [LARGE SCALE GENOMIC DNA]</scope>
    <source>
        <strain>ATCC 33406 / DSM 1761 / JCM 20678 / CIP 103989 / IAM 12607 / NBRC 15051 / NCIMB 9469 / D465</strain>
    </source>
</reference>
<organism>
    <name type="scientific">Cytophaga hutchinsonii (strain ATCC 33406 / DSM 1761 / CIP 103989 / NBRC 15051 / NCIMB 9469 / D465)</name>
    <dbReference type="NCBI Taxonomy" id="269798"/>
    <lineage>
        <taxon>Bacteria</taxon>
        <taxon>Pseudomonadati</taxon>
        <taxon>Bacteroidota</taxon>
        <taxon>Cytophagia</taxon>
        <taxon>Cytophagales</taxon>
        <taxon>Cytophagaceae</taxon>
        <taxon>Cytophaga</taxon>
    </lineage>
</organism>
<dbReference type="EC" id="2.7.7.6" evidence="1"/>
<dbReference type="EMBL" id="CP000383">
    <property type="protein sequence ID" value="ABG60376.1"/>
    <property type="molecule type" value="Genomic_DNA"/>
</dbReference>
<dbReference type="RefSeq" id="WP_011586485.1">
    <property type="nucleotide sequence ID" value="NC_008255.1"/>
</dbReference>
<dbReference type="SMR" id="Q11QD8"/>
<dbReference type="STRING" id="269798.CHU_3136"/>
<dbReference type="KEGG" id="chu:CHU_3136"/>
<dbReference type="eggNOG" id="COG0202">
    <property type="taxonomic scope" value="Bacteria"/>
</dbReference>
<dbReference type="HOGENOM" id="CLU_053084_0_1_10"/>
<dbReference type="OrthoDB" id="9805706at2"/>
<dbReference type="Proteomes" id="UP000001822">
    <property type="component" value="Chromosome"/>
</dbReference>
<dbReference type="GO" id="GO:0005737">
    <property type="term" value="C:cytoplasm"/>
    <property type="evidence" value="ECO:0007669"/>
    <property type="project" value="UniProtKB-ARBA"/>
</dbReference>
<dbReference type="GO" id="GO:0000428">
    <property type="term" value="C:DNA-directed RNA polymerase complex"/>
    <property type="evidence" value="ECO:0007669"/>
    <property type="project" value="UniProtKB-KW"/>
</dbReference>
<dbReference type="GO" id="GO:0003677">
    <property type="term" value="F:DNA binding"/>
    <property type="evidence" value="ECO:0007669"/>
    <property type="project" value="UniProtKB-UniRule"/>
</dbReference>
<dbReference type="GO" id="GO:0003899">
    <property type="term" value="F:DNA-directed RNA polymerase activity"/>
    <property type="evidence" value="ECO:0007669"/>
    <property type="project" value="UniProtKB-UniRule"/>
</dbReference>
<dbReference type="GO" id="GO:0046983">
    <property type="term" value="F:protein dimerization activity"/>
    <property type="evidence" value="ECO:0007669"/>
    <property type="project" value="InterPro"/>
</dbReference>
<dbReference type="GO" id="GO:0006351">
    <property type="term" value="P:DNA-templated transcription"/>
    <property type="evidence" value="ECO:0007669"/>
    <property type="project" value="UniProtKB-UniRule"/>
</dbReference>
<dbReference type="CDD" id="cd06928">
    <property type="entry name" value="RNAP_alpha_NTD"/>
    <property type="match status" value="1"/>
</dbReference>
<dbReference type="FunFam" id="2.170.120.12:FF:000001">
    <property type="entry name" value="DNA-directed RNA polymerase subunit alpha"/>
    <property type="match status" value="1"/>
</dbReference>
<dbReference type="Gene3D" id="1.10.150.20">
    <property type="entry name" value="5' to 3' exonuclease, C-terminal subdomain"/>
    <property type="match status" value="1"/>
</dbReference>
<dbReference type="Gene3D" id="2.170.120.12">
    <property type="entry name" value="DNA-directed RNA polymerase, insert domain"/>
    <property type="match status" value="1"/>
</dbReference>
<dbReference type="Gene3D" id="3.30.1360.10">
    <property type="entry name" value="RNA polymerase, RBP11-like subunit"/>
    <property type="match status" value="1"/>
</dbReference>
<dbReference type="HAMAP" id="MF_00059">
    <property type="entry name" value="RNApol_bact_RpoA"/>
    <property type="match status" value="1"/>
</dbReference>
<dbReference type="InterPro" id="IPR011262">
    <property type="entry name" value="DNA-dir_RNA_pol_insert"/>
</dbReference>
<dbReference type="InterPro" id="IPR011263">
    <property type="entry name" value="DNA-dir_RNA_pol_RpoA/D/Rpb3"/>
</dbReference>
<dbReference type="InterPro" id="IPR011773">
    <property type="entry name" value="DNA-dir_RpoA"/>
</dbReference>
<dbReference type="InterPro" id="IPR036603">
    <property type="entry name" value="RBP11-like"/>
</dbReference>
<dbReference type="InterPro" id="IPR011260">
    <property type="entry name" value="RNAP_asu_C"/>
</dbReference>
<dbReference type="InterPro" id="IPR036643">
    <property type="entry name" value="RNApol_insert_sf"/>
</dbReference>
<dbReference type="NCBIfam" id="NF003513">
    <property type="entry name" value="PRK05182.1-2"/>
    <property type="match status" value="1"/>
</dbReference>
<dbReference type="NCBIfam" id="NF003516">
    <property type="entry name" value="PRK05182.2-2"/>
    <property type="match status" value="1"/>
</dbReference>
<dbReference type="NCBIfam" id="NF003519">
    <property type="entry name" value="PRK05182.2-5"/>
    <property type="match status" value="1"/>
</dbReference>
<dbReference type="NCBIfam" id="TIGR02027">
    <property type="entry name" value="rpoA"/>
    <property type="match status" value="1"/>
</dbReference>
<dbReference type="Pfam" id="PF01000">
    <property type="entry name" value="RNA_pol_A_bac"/>
    <property type="match status" value="1"/>
</dbReference>
<dbReference type="Pfam" id="PF03118">
    <property type="entry name" value="RNA_pol_A_CTD"/>
    <property type="match status" value="1"/>
</dbReference>
<dbReference type="Pfam" id="PF01193">
    <property type="entry name" value="RNA_pol_L"/>
    <property type="match status" value="1"/>
</dbReference>
<dbReference type="SMART" id="SM00662">
    <property type="entry name" value="RPOLD"/>
    <property type="match status" value="1"/>
</dbReference>
<dbReference type="SUPFAM" id="SSF47789">
    <property type="entry name" value="C-terminal domain of RNA polymerase alpha subunit"/>
    <property type="match status" value="1"/>
</dbReference>
<dbReference type="SUPFAM" id="SSF56553">
    <property type="entry name" value="Insert subdomain of RNA polymerase alpha subunit"/>
    <property type="match status" value="1"/>
</dbReference>
<dbReference type="SUPFAM" id="SSF55257">
    <property type="entry name" value="RBP11-like subunits of RNA polymerase"/>
    <property type="match status" value="1"/>
</dbReference>
<sequence>MSILSFQMPEKVVMEKADDFHGLFEFKPLEKGYGVTIGNALRRILLSSLEGYAITGIKVPGVLHEFSTIPGVREDVTEIILNLKQVRFKKISDVNENKIVVSIKKQASFKAGDIAKFTSAYQILNPELLICNVDSNSNFDIELTLEKGRGYLPAEENKPAEQIFGYIPIDAIFTPIKNVKYSVENTRVEQRTDYEKLILEILTDGSIHPEDALKGAANILIKHFMLFSDQTMTFEAVKAEEEETVDEEFLHMRKLLKTSLADLDLSVRAYNCLKAADIKTLGELATLDISDMMKFRNFGKKSLNELEQLIIDKNLSFGMDTAKYKLDED</sequence>
<name>RPOA_CYTH3</name>